<comment type="alternative products">
    <event type="alternative splicing"/>
    <isoform>
        <id>Q8VCC6-1</id>
        <name>1</name>
        <sequence type="displayed"/>
    </isoform>
    <isoform>
        <id>Q8VCC6-2</id>
        <name>2</name>
        <sequence type="described" ref="VSP_044624 VSP_044625"/>
    </isoform>
</comment>
<comment type="similarity">
    <text evidence="3">Belongs to the CCM2 family.</text>
</comment>
<gene>
    <name type="primary">Ccm2l</name>
</gene>
<organism>
    <name type="scientific">Mus musculus</name>
    <name type="common">Mouse</name>
    <dbReference type="NCBI Taxonomy" id="10090"/>
    <lineage>
        <taxon>Eukaryota</taxon>
        <taxon>Metazoa</taxon>
        <taxon>Chordata</taxon>
        <taxon>Craniata</taxon>
        <taxon>Vertebrata</taxon>
        <taxon>Euteleostomi</taxon>
        <taxon>Mammalia</taxon>
        <taxon>Eutheria</taxon>
        <taxon>Euarchontoglires</taxon>
        <taxon>Glires</taxon>
        <taxon>Rodentia</taxon>
        <taxon>Myomorpha</taxon>
        <taxon>Muroidea</taxon>
        <taxon>Muridae</taxon>
        <taxon>Murinae</taxon>
        <taxon>Mus</taxon>
        <taxon>Mus</taxon>
    </lineage>
</organism>
<evidence type="ECO:0000256" key="1">
    <source>
        <dbReference type="SAM" id="MobiDB-lite"/>
    </source>
</evidence>
<evidence type="ECO:0000303" key="2">
    <source>
    </source>
</evidence>
<evidence type="ECO:0000305" key="3"/>
<dbReference type="EMBL" id="GL456092">
    <property type="status" value="NOT_ANNOTATED_CDS"/>
    <property type="molecule type" value="Genomic_DNA"/>
</dbReference>
<dbReference type="EMBL" id="BC020535">
    <property type="protein sequence ID" value="AAH20535.1"/>
    <property type="molecule type" value="mRNA"/>
</dbReference>
<dbReference type="CCDS" id="CCDS50755.1">
    <molecule id="Q8VCC6-1"/>
</dbReference>
<dbReference type="RefSeq" id="NP_663511.2">
    <molecule id="Q8VCC6-1"/>
    <property type="nucleotide sequence ID" value="NM_145536.3"/>
</dbReference>
<dbReference type="SMR" id="Q8VCC6"/>
<dbReference type="FunCoup" id="Q8VCC6">
    <property type="interactions" value="7"/>
</dbReference>
<dbReference type="STRING" id="10090.ENSMUSP00000105425"/>
<dbReference type="iPTMnet" id="Q8VCC6"/>
<dbReference type="PhosphoSitePlus" id="Q8VCC6"/>
<dbReference type="PaxDb" id="10090-ENSMUSP00000105425"/>
<dbReference type="ProteomicsDB" id="265614">
    <molecule id="Q8VCC6-1"/>
</dbReference>
<dbReference type="ProteomicsDB" id="265615">
    <molecule id="Q8VCC6-2"/>
</dbReference>
<dbReference type="Antibodypedia" id="2011">
    <property type="antibodies" value="67 antibodies from 16 providers"/>
</dbReference>
<dbReference type="DNASU" id="228788"/>
<dbReference type="Ensembl" id="ENSMUST00000109800.2">
    <molecule id="Q8VCC6-1"/>
    <property type="protein sequence ID" value="ENSMUSP00000105425.2"/>
    <property type="gene ID" value="ENSMUSG00000027474.14"/>
</dbReference>
<dbReference type="GeneID" id="228788"/>
<dbReference type="KEGG" id="mmu:228788"/>
<dbReference type="UCSC" id="uc012cgo.2">
    <molecule id="Q8VCC6-1"/>
    <property type="organism name" value="mouse"/>
</dbReference>
<dbReference type="AGR" id="MGI:2385159"/>
<dbReference type="CTD" id="140706"/>
<dbReference type="MGI" id="MGI:2385159">
    <property type="gene designation" value="Ccm2l"/>
</dbReference>
<dbReference type="VEuPathDB" id="HostDB:ENSMUSG00000027474"/>
<dbReference type="eggNOG" id="ENOG502QW6F">
    <property type="taxonomic scope" value="Eukaryota"/>
</dbReference>
<dbReference type="GeneTree" id="ENSGT00390000016168"/>
<dbReference type="HOGENOM" id="CLU_051853_0_0_1"/>
<dbReference type="InParanoid" id="Q8VCC6"/>
<dbReference type="PhylomeDB" id="Q8VCC6"/>
<dbReference type="BioGRID-ORCS" id="228788">
    <property type="hits" value="1 hit in 76 CRISPR screens"/>
</dbReference>
<dbReference type="PRO" id="PR:Q8VCC6"/>
<dbReference type="Proteomes" id="UP000000589">
    <property type="component" value="Chromosome 2"/>
</dbReference>
<dbReference type="RNAct" id="Q8VCC6">
    <property type="molecule type" value="protein"/>
</dbReference>
<dbReference type="Bgee" id="ENSMUSG00000027474">
    <property type="expression patterns" value="Expressed in cardiovascular system endothelium and 159 other cell types or tissues"/>
</dbReference>
<dbReference type="ExpressionAtlas" id="Q8VCC6">
    <property type="expression patterns" value="baseline and differential"/>
</dbReference>
<dbReference type="GO" id="GO:0003209">
    <property type="term" value="P:cardiac atrium morphogenesis"/>
    <property type="evidence" value="ECO:0000316"/>
    <property type="project" value="MGI"/>
</dbReference>
<dbReference type="GO" id="GO:0055017">
    <property type="term" value="P:cardiac muscle tissue growth"/>
    <property type="evidence" value="ECO:0000316"/>
    <property type="project" value="MGI"/>
</dbReference>
<dbReference type="GO" id="GO:0034109">
    <property type="term" value="P:homotypic cell-cell adhesion"/>
    <property type="evidence" value="ECO:0000314"/>
    <property type="project" value="MGI"/>
</dbReference>
<dbReference type="GO" id="GO:0034111">
    <property type="term" value="P:negative regulation of homotypic cell-cell adhesion"/>
    <property type="evidence" value="ECO:0000314"/>
    <property type="project" value="MGI"/>
</dbReference>
<dbReference type="GO" id="GO:0090271">
    <property type="term" value="P:positive regulation of fibroblast growth factor production"/>
    <property type="evidence" value="ECO:0000316"/>
    <property type="project" value="MGI"/>
</dbReference>
<dbReference type="GO" id="GO:0003222">
    <property type="term" value="P:ventricular trabecula myocardium morphogenesis"/>
    <property type="evidence" value="ECO:0000316"/>
    <property type="project" value="MGI"/>
</dbReference>
<dbReference type="GO" id="GO:0042060">
    <property type="term" value="P:wound healing"/>
    <property type="evidence" value="ECO:0000315"/>
    <property type="project" value="MGI"/>
</dbReference>
<dbReference type="CDD" id="cd13166">
    <property type="entry name" value="PTB_CCM2"/>
    <property type="match status" value="1"/>
</dbReference>
<dbReference type="Gene3D" id="2.30.29.30">
    <property type="entry name" value="Pleckstrin-homology domain (PH domain)/Phosphotyrosine-binding domain (PTB)"/>
    <property type="match status" value="1"/>
</dbReference>
<dbReference type="InterPro" id="IPR026159">
    <property type="entry name" value="Malcavernin"/>
</dbReference>
<dbReference type="InterPro" id="IPR011993">
    <property type="entry name" value="PH-like_dom_sf"/>
</dbReference>
<dbReference type="PANTHER" id="PTHR21642:SF2">
    <property type="entry name" value="CEREBRAL CAVERNOUS MALFORMATIONS 2 PROTEIN-LIKE"/>
    <property type="match status" value="1"/>
</dbReference>
<dbReference type="PANTHER" id="PTHR21642">
    <property type="entry name" value="CEREBRAL CAVERNOUS MALFORMATIONS PROTEIN 2 HOMOLOG"/>
    <property type="match status" value="1"/>
</dbReference>
<keyword id="KW-0025">Alternative splicing</keyword>
<keyword id="KW-1185">Reference proteome</keyword>
<accession>Q8VCC6</accession>
<proteinExistence type="evidence at transcript level"/>
<sequence>MEYEAKKGKKGFVSPIRRLVFPKAARQAAFRSSVSRRPLHSMPLYPPDYLIDPHILLCDYLEKEVKFLGHLTWVTSSLNPSSRDELLQLLDTARQLKELPLKTTPEQDSILSLSARCLLLTWRDNEELILRIPTHEIAAASYLQDDALHLLVLKTGLGVDPVPAGMDGSPGGSGRDPGPPGAAPEKRRVGTAERRHTICSLDWRVAWGGGAGAEARAAGGGGSLERQRAGARASGSWERRQTFSGSWERRHAGGGAGKPGGSWERRQASGGVGGSWERRHPGPNPLDPQNHSPDAYCNLVILAVANRDAAEESCALICQVFQIIYGDQSIECVDRAGYHYRSTPKRPWLSSCTMAPRTHLKRATVAHPHRLSTAPTAAVSTTAAGPSSSYRITWSRCGVSWVLLRSSSLHCCYETIVWGCLSRTTVQVCRNSMGTDGSSFSLECGPSSQIRTSATSRASWRVWVSARAESSLTALAASSAA</sequence>
<protein>
    <recommendedName>
        <fullName>Cerebral cavernous malformations 2 protein-like</fullName>
        <shortName>CCM2-like</shortName>
    </recommendedName>
</protein>
<feature type="chain" id="PRO_0000079477" description="Cerebral cavernous malformations 2 protein-like">
    <location>
        <begin position="1"/>
        <end position="481"/>
    </location>
</feature>
<feature type="region of interest" description="Disordered" evidence="1">
    <location>
        <begin position="161"/>
        <end position="193"/>
    </location>
</feature>
<feature type="region of interest" description="Disordered" evidence="1">
    <location>
        <begin position="214"/>
        <end position="290"/>
    </location>
</feature>
<feature type="compositionally biased region" description="Basic and acidic residues" evidence="1">
    <location>
        <begin position="184"/>
        <end position="193"/>
    </location>
</feature>
<feature type="compositionally biased region" description="Gly residues" evidence="1">
    <location>
        <begin position="214"/>
        <end position="223"/>
    </location>
</feature>
<feature type="compositionally biased region" description="Basic and acidic residues" evidence="1">
    <location>
        <begin position="237"/>
        <end position="251"/>
    </location>
</feature>
<feature type="splice variant" id="VSP_044624" description="In isoform 2." evidence="2">
    <original>LGVDPVPAGMDGSPGGSGRDPGPPGAAPEKRRVGTA</original>
    <variation>AARVWGWTLCLRAWMAAREVRVAIPALRAPRPRNDG</variation>
    <location>
        <begin position="157"/>
        <end position="192"/>
    </location>
</feature>
<feature type="splice variant" id="VSP_044625" description="In isoform 2." evidence="2">
    <location>
        <begin position="193"/>
        <end position="481"/>
    </location>
</feature>
<name>CCM2L_MOUSE</name>
<reference key="1">
    <citation type="journal article" date="2009" name="PLoS Biol.">
        <title>Lineage-specific biology revealed by a finished genome assembly of the mouse.</title>
        <authorList>
            <person name="Church D.M."/>
            <person name="Goodstadt L."/>
            <person name="Hillier L.W."/>
            <person name="Zody M.C."/>
            <person name="Goldstein S."/>
            <person name="She X."/>
            <person name="Bult C.J."/>
            <person name="Agarwala R."/>
            <person name="Cherry J.L."/>
            <person name="DiCuccio M."/>
            <person name="Hlavina W."/>
            <person name="Kapustin Y."/>
            <person name="Meric P."/>
            <person name="Maglott D."/>
            <person name="Birtle Z."/>
            <person name="Marques A.C."/>
            <person name="Graves T."/>
            <person name="Zhou S."/>
            <person name="Teague B."/>
            <person name="Potamousis K."/>
            <person name="Churas C."/>
            <person name="Place M."/>
            <person name="Herschleb J."/>
            <person name="Runnheim R."/>
            <person name="Forrest D."/>
            <person name="Amos-Landgraf J."/>
            <person name="Schwartz D.C."/>
            <person name="Cheng Z."/>
            <person name="Lindblad-Toh K."/>
            <person name="Eichler E.E."/>
            <person name="Ponting C.P."/>
        </authorList>
    </citation>
    <scope>NUCLEOTIDE SEQUENCE [LARGE SCALE GENOMIC DNA]</scope>
    <source>
        <strain>C57BL/6J</strain>
    </source>
</reference>
<reference key="2">
    <citation type="journal article" date="2004" name="Genome Res.">
        <title>The status, quality, and expansion of the NIH full-length cDNA project: the Mammalian Gene Collection (MGC).</title>
        <authorList>
            <consortium name="The MGC Project Team"/>
        </authorList>
    </citation>
    <scope>NUCLEOTIDE SEQUENCE [LARGE SCALE MRNA] (ISOFORM 2)</scope>
    <source>
        <tissue>Kidney</tissue>
    </source>
</reference>